<reference key="1">
    <citation type="journal article" date="2006" name="J. Bacteriol.">
        <title>Comparison of the genome sequence of the poultry pathogen Bordetella avium with those of B. bronchiseptica, B. pertussis, and B. parapertussis reveals extensive diversity in surface structures associated with host interaction.</title>
        <authorList>
            <person name="Sebaihia M."/>
            <person name="Preston A."/>
            <person name="Maskell D.J."/>
            <person name="Kuzmiak H."/>
            <person name="Connell T.D."/>
            <person name="King N.D."/>
            <person name="Orndorff P.E."/>
            <person name="Miyamoto D.M."/>
            <person name="Thomson N.R."/>
            <person name="Harris D."/>
            <person name="Goble A."/>
            <person name="Lord A."/>
            <person name="Murphy L."/>
            <person name="Quail M.A."/>
            <person name="Rutter S."/>
            <person name="Squares R."/>
            <person name="Squares S."/>
            <person name="Woodward J."/>
            <person name="Parkhill J."/>
            <person name="Temple L.M."/>
        </authorList>
    </citation>
    <scope>NUCLEOTIDE SEQUENCE [LARGE SCALE GENOMIC DNA]</scope>
    <source>
        <strain>197N</strain>
    </source>
</reference>
<dbReference type="EC" id="7.1.2.2" evidence="1"/>
<dbReference type="EMBL" id="AM167904">
    <property type="protein sequence ID" value="CAJ50826.1"/>
    <property type="molecule type" value="Genomic_DNA"/>
</dbReference>
<dbReference type="RefSeq" id="WP_012418854.1">
    <property type="nucleotide sequence ID" value="NC_010645.1"/>
</dbReference>
<dbReference type="SMR" id="Q2KU34"/>
<dbReference type="STRING" id="360910.BAV3216"/>
<dbReference type="GeneID" id="92933526"/>
<dbReference type="KEGG" id="bav:BAV3216"/>
<dbReference type="eggNOG" id="COG0056">
    <property type="taxonomic scope" value="Bacteria"/>
</dbReference>
<dbReference type="HOGENOM" id="CLU_010091_2_1_4"/>
<dbReference type="OrthoDB" id="9803053at2"/>
<dbReference type="Proteomes" id="UP000001977">
    <property type="component" value="Chromosome"/>
</dbReference>
<dbReference type="GO" id="GO:0005886">
    <property type="term" value="C:plasma membrane"/>
    <property type="evidence" value="ECO:0007669"/>
    <property type="project" value="UniProtKB-SubCell"/>
</dbReference>
<dbReference type="GO" id="GO:0045259">
    <property type="term" value="C:proton-transporting ATP synthase complex"/>
    <property type="evidence" value="ECO:0007669"/>
    <property type="project" value="UniProtKB-KW"/>
</dbReference>
<dbReference type="GO" id="GO:0043531">
    <property type="term" value="F:ADP binding"/>
    <property type="evidence" value="ECO:0007669"/>
    <property type="project" value="TreeGrafter"/>
</dbReference>
<dbReference type="GO" id="GO:0005524">
    <property type="term" value="F:ATP binding"/>
    <property type="evidence" value="ECO:0007669"/>
    <property type="project" value="UniProtKB-UniRule"/>
</dbReference>
<dbReference type="GO" id="GO:0046933">
    <property type="term" value="F:proton-transporting ATP synthase activity, rotational mechanism"/>
    <property type="evidence" value="ECO:0007669"/>
    <property type="project" value="UniProtKB-UniRule"/>
</dbReference>
<dbReference type="CDD" id="cd18113">
    <property type="entry name" value="ATP-synt_F1_alpha_C"/>
    <property type="match status" value="1"/>
</dbReference>
<dbReference type="CDD" id="cd18116">
    <property type="entry name" value="ATP-synt_F1_alpha_N"/>
    <property type="match status" value="1"/>
</dbReference>
<dbReference type="CDD" id="cd01132">
    <property type="entry name" value="F1-ATPase_alpha_CD"/>
    <property type="match status" value="1"/>
</dbReference>
<dbReference type="FunFam" id="1.20.150.20:FF:000001">
    <property type="entry name" value="ATP synthase subunit alpha"/>
    <property type="match status" value="1"/>
</dbReference>
<dbReference type="FunFam" id="2.40.30.20:FF:000001">
    <property type="entry name" value="ATP synthase subunit alpha"/>
    <property type="match status" value="1"/>
</dbReference>
<dbReference type="FunFam" id="3.40.50.300:FF:000002">
    <property type="entry name" value="ATP synthase subunit alpha"/>
    <property type="match status" value="1"/>
</dbReference>
<dbReference type="Gene3D" id="2.40.30.20">
    <property type="match status" value="1"/>
</dbReference>
<dbReference type="Gene3D" id="1.20.150.20">
    <property type="entry name" value="ATP synthase alpha/beta chain, C-terminal domain"/>
    <property type="match status" value="1"/>
</dbReference>
<dbReference type="Gene3D" id="3.40.50.300">
    <property type="entry name" value="P-loop containing nucleotide triphosphate hydrolases"/>
    <property type="match status" value="1"/>
</dbReference>
<dbReference type="HAMAP" id="MF_01346">
    <property type="entry name" value="ATP_synth_alpha_bact"/>
    <property type="match status" value="1"/>
</dbReference>
<dbReference type="InterPro" id="IPR023366">
    <property type="entry name" value="ATP_synth_asu-like_sf"/>
</dbReference>
<dbReference type="InterPro" id="IPR000793">
    <property type="entry name" value="ATP_synth_asu_C"/>
</dbReference>
<dbReference type="InterPro" id="IPR038376">
    <property type="entry name" value="ATP_synth_asu_C_sf"/>
</dbReference>
<dbReference type="InterPro" id="IPR033732">
    <property type="entry name" value="ATP_synth_F1_a_nt-bd_dom"/>
</dbReference>
<dbReference type="InterPro" id="IPR005294">
    <property type="entry name" value="ATP_synth_F1_asu"/>
</dbReference>
<dbReference type="InterPro" id="IPR020003">
    <property type="entry name" value="ATPase_a/bsu_AS"/>
</dbReference>
<dbReference type="InterPro" id="IPR004100">
    <property type="entry name" value="ATPase_F1/V1/A1_a/bsu_N"/>
</dbReference>
<dbReference type="InterPro" id="IPR036121">
    <property type="entry name" value="ATPase_F1/V1/A1_a/bsu_N_sf"/>
</dbReference>
<dbReference type="InterPro" id="IPR000194">
    <property type="entry name" value="ATPase_F1/V1/A1_a/bsu_nucl-bd"/>
</dbReference>
<dbReference type="InterPro" id="IPR027417">
    <property type="entry name" value="P-loop_NTPase"/>
</dbReference>
<dbReference type="NCBIfam" id="TIGR00962">
    <property type="entry name" value="atpA"/>
    <property type="match status" value="1"/>
</dbReference>
<dbReference type="NCBIfam" id="NF009884">
    <property type="entry name" value="PRK13343.1"/>
    <property type="match status" value="1"/>
</dbReference>
<dbReference type="PANTHER" id="PTHR48082">
    <property type="entry name" value="ATP SYNTHASE SUBUNIT ALPHA, MITOCHONDRIAL"/>
    <property type="match status" value="1"/>
</dbReference>
<dbReference type="PANTHER" id="PTHR48082:SF2">
    <property type="entry name" value="ATP SYNTHASE SUBUNIT ALPHA, MITOCHONDRIAL"/>
    <property type="match status" value="1"/>
</dbReference>
<dbReference type="Pfam" id="PF00006">
    <property type="entry name" value="ATP-synt_ab"/>
    <property type="match status" value="1"/>
</dbReference>
<dbReference type="Pfam" id="PF00306">
    <property type="entry name" value="ATP-synt_ab_C"/>
    <property type="match status" value="1"/>
</dbReference>
<dbReference type="Pfam" id="PF02874">
    <property type="entry name" value="ATP-synt_ab_N"/>
    <property type="match status" value="1"/>
</dbReference>
<dbReference type="PIRSF" id="PIRSF039088">
    <property type="entry name" value="F_ATPase_subunit_alpha"/>
    <property type="match status" value="1"/>
</dbReference>
<dbReference type="SUPFAM" id="SSF47917">
    <property type="entry name" value="C-terminal domain of alpha and beta subunits of F1 ATP synthase"/>
    <property type="match status" value="1"/>
</dbReference>
<dbReference type="SUPFAM" id="SSF50615">
    <property type="entry name" value="N-terminal domain of alpha and beta subunits of F1 ATP synthase"/>
    <property type="match status" value="1"/>
</dbReference>
<dbReference type="SUPFAM" id="SSF52540">
    <property type="entry name" value="P-loop containing nucleoside triphosphate hydrolases"/>
    <property type="match status" value="1"/>
</dbReference>
<dbReference type="PROSITE" id="PS00152">
    <property type="entry name" value="ATPASE_ALPHA_BETA"/>
    <property type="match status" value="1"/>
</dbReference>
<proteinExistence type="inferred from homology"/>
<evidence type="ECO:0000255" key="1">
    <source>
        <dbReference type="HAMAP-Rule" id="MF_01346"/>
    </source>
</evidence>
<comment type="function">
    <text evidence="1">Produces ATP from ADP in the presence of a proton gradient across the membrane. The alpha chain is a regulatory subunit.</text>
</comment>
<comment type="catalytic activity">
    <reaction evidence="1">
        <text>ATP + H2O + 4 H(+)(in) = ADP + phosphate + 5 H(+)(out)</text>
        <dbReference type="Rhea" id="RHEA:57720"/>
        <dbReference type="ChEBI" id="CHEBI:15377"/>
        <dbReference type="ChEBI" id="CHEBI:15378"/>
        <dbReference type="ChEBI" id="CHEBI:30616"/>
        <dbReference type="ChEBI" id="CHEBI:43474"/>
        <dbReference type="ChEBI" id="CHEBI:456216"/>
        <dbReference type="EC" id="7.1.2.2"/>
    </reaction>
</comment>
<comment type="subunit">
    <text evidence="1">F-type ATPases have 2 components, CF(1) - the catalytic core - and CF(0) - the membrane proton channel. CF(1) has five subunits: alpha(3), beta(3), gamma(1), delta(1), epsilon(1). CF(0) has three main subunits: a(1), b(2) and c(9-12). The alpha and beta chains form an alternating ring which encloses part of the gamma chain. CF(1) is attached to CF(0) by a central stalk formed by the gamma and epsilon chains, while a peripheral stalk is formed by the delta and b chains.</text>
</comment>
<comment type="subcellular location">
    <subcellularLocation>
        <location evidence="1">Cell inner membrane</location>
        <topology evidence="1">Peripheral membrane protein</topology>
    </subcellularLocation>
</comment>
<comment type="similarity">
    <text evidence="1">Belongs to the ATPase alpha/beta chains family.</text>
</comment>
<name>ATPA_BORA1</name>
<sequence length="513" mass="55607">MQLNPSEISELLKSRIEGLGASTDVRTQGTVVSVTDGITRIHGLSDVMQGEMLEFPNNVFGLALNLERDSVGAVILGDYTGVSEGDQVKTTGRILEVPVGPELRGRVVNTLGLPIDGKGPINTKETDIIEKVAPGVIARRSVSQPLQTGIKAIDSMVPIGRGQRELIIGDRQTGKTAVAVDTIISQKGKGVTCVYVAIGQKASTINNVVRKLEEHGAMEYTIVVAASASDSAAMQYLAAYAGCTMGEYFRDRGEDALIIYDDLTKQAWAYRQVSLLLRRPPGREAYPGDVFYLHSRLLERAARVNEEYVEKFTNGAVKGKTGSLTALPIIETQAGDVSAFVPTNVISITDGQIFLETDLFNAGVRPAINAGISVSRVGGAAQTKVVKKLSGGIRTDLAQYRELAAFAQFASDLDDATRRQLERGKRVVELLKQPQYQPLQVWELAVSLYTVNNGYLDDVDVAQVLSFEKSLKDQLKAKHAALIQRIEDTKELSKDDEAELAAAVQDFKKHGAF</sequence>
<keyword id="KW-0066">ATP synthesis</keyword>
<keyword id="KW-0067">ATP-binding</keyword>
<keyword id="KW-0997">Cell inner membrane</keyword>
<keyword id="KW-1003">Cell membrane</keyword>
<keyword id="KW-0139">CF(1)</keyword>
<keyword id="KW-0375">Hydrogen ion transport</keyword>
<keyword id="KW-0406">Ion transport</keyword>
<keyword id="KW-0472">Membrane</keyword>
<keyword id="KW-0547">Nucleotide-binding</keyword>
<keyword id="KW-1185">Reference proteome</keyword>
<keyword id="KW-1278">Translocase</keyword>
<keyword id="KW-0813">Transport</keyword>
<organism>
    <name type="scientific">Bordetella avium (strain 197N)</name>
    <dbReference type="NCBI Taxonomy" id="360910"/>
    <lineage>
        <taxon>Bacteria</taxon>
        <taxon>Pseudomonadati</taxon>
        <taxon>Pseudomonadota</taxon>
        <taxon>Betaproteobacteria</taxon>
        <taxon>Burkholderiales</taxon>
        <taxon>Alcaligenaceae</taxon>
        <taxon>Bordetella</taxon>
    </lineage>
</organism>
<accession>Q2KU34</accession>
<protein>
    <recommendedName>
        <fullName evidence="1">ATP synthase subunit alpha</fullName>
        <ecNumber evidence="1">7.1.2.2</ecNumber>
    </recommendedName>
    <alternativeName>
        <fullName evidence="1">ATP synthase F1 sector subunit alpha</fullName>
    </alternativeName>
    <alternativeName>
        <fullName evidence="1">F-ATPase subunit alpha</fullName>
    </alternativeName>
</protein>
<feature type="chain" id="PRO_0000238208" description="ATP synthase subunit alpha">
    <location>
        <begin position="1"/>
        <end position="513"/>
    </location>
</feature>
<feature type="binding site" evidence="1">
    <location>
        <begin position="169"/>
        <end position="176"/>
    </location>
    <ligand>
        <name>ATP</name>
        <dbReference type="ChEBI" id="CHEBI:30616"/>
    </ligand>
</feature>
<feature type="site" description="Required for activity" evidence="1">
    <location>
        <position position="373"/>
    </location>
</feature>
<gene>
    <name evidence="1" type="primary">atpA</name>
    <name type="ordered locus">BAV3216</name>
</gene>